<name>SYT_CAMC1</name>
<reference key="1">
    <citation type="submission" date="2007-10" db="EMBL/GenBank/DDBJ databases">
        <title>Genome sequence of Campylobacter concisus 13826 isolated from human feces.</title>
        <authorList>
            <person name="Fouts D.E."/>
            <person name="Mongodin E.F."/>
            <person name="Puiu D."/>
            <person name="Sebastian Y."/>
            <person name="Miller W.G."/>
            <person name="Mandrell R.E."/>
            <person name="On S."/>
            <person name="Nelson K.E."/>
        </authorList>
    </citation>
    <scope>NUCLEOTIDE SEQUENCE [LARGE SCALE GENOMIC DNA]</scope>
    <source>
        <strain>13826</strain>
    </source>
</reference>
<protein>
    <recommendedName>
        <fullName evidence="1">Threonine--tRNA ligase</fullName>
        <ecNumber evidence="1">6.1.1.3</ecNumber>
    </recommendedName>
    <alternativeName>
        <fullName evidence="1">Threonyl-tRNA synthetase</fullName>
        <shortName evidence="1">ThrRS</shortName>
    </alternativeName>
</protein>
<gene>
    <name evidence="1" type="primary">thrS</name>
    <name type="ordered locus">Ccon26_00330</name>
    <name type="ORF">CCC13826_1819</name>
</gene>
<keyword id="KW-0030">Aminoacyl-tRNA synthetase</keyword>
<keyword id="KW-0067">ATP-binding</keyword>
<keyword id="KW-0963">Cytoplasm</keyword>
<keyword id="KW-0436">Ligase</keyword>
<keyword id="KW-0479">Metal-binding</keyword>
<keyword id="KW-0547">Nucleotide-binding</keyword>
<keyword id="KW-0648">Protein biosynthesis</keyword>
<keyword id="KW-0694">RNA-binding</keyword>
<keyword id="KW-0820">tRNA-binding</keyword>
<keyword id="KW-0862">Zinc</keyword>
<proteinExistence type="inferred from homology"/>
<accession>A7ZAZ7</accession>
<organism>
    <name type="scientific">Campylobacter concisus (strain 13826)</name>
    <dbReference type="NCBI Taxonomy" id="360104"/>
    <lineage>
        <taxon>Bacteria</taxon>
        <taxon>Pseudomonadati</taxon>
        <taxon>Campylobacterota</taxon>
        <taxon>Epsilonproteobacteria</taxon>
        <taxon>Campylobacterales</taxon>
        <taxon>Campylobacteraceae</taxon>
        <taxon>Campylobacter</taxon>
    </lineage>
</organism>
<feature type="chain" id="PRO_1000071671" description="Threonine--tRNA ligase">
    <location>
        <begin position="1"/>
        <end position="606"/>
    </location>
</feature>
<feature type="region of interest" description="Catalytic" evidence="1">
    <location>
        <begin position="212"/>
        <end position="503"/>
    </location>
</feature>
<feature type="binding site" evidence="1">
    <location>
        <position position="304"/>
    </location>
    <ligand>
        <name>Zn(2+)</name>
        <dbReference type="ChEBI" id="CHEBI:29105"/>
    </ligand>
</feature>
<feature type="binding site" evidence="1">
    <location>
        <position position="355"/>
    </location>
    <ligand>
        <name>Zn(2+)</name>
        <dbReference type="ChEBI" id="CHEBI:29105"/>
    </ligand>
</feature>
<feature type="binding site" evidence="1">
    <location>
        <position position="480"/>
    </location>
    <ligand>
        <name>Zn(2+)</name>
        <dbReference type="ChEBI" id="CHEBI:29105"/>
    </ligand>
</feature>
<evidence type="ECO:0000255" key="1">
    <source>
        <dbReference type="HAMAP-Rule" id="MF_00184"/>
    </source>
</evidence>
<dbReference type="EC" id="6.1.1.3" evidence="1"/>
<dbReference type="EMBL" id="CP000792">
    <property type="protein sequence ID" value="EAT99165.1"/>
    <property type="molecule type" value="Genomic_DNA"/>
</dbReference>
<dbReference type="RefSeq" id="WP_012000985.1">
    <property type="nucleotide sequence ID" value="NC_009802.2"/>
</dbReference>
<dbReference type="SMR" id="A7ZAZ7"/>
<dbReference type="STRING" id="360104.CCC13826_1819"/>
<dbReference type="KEGG" id="cco:CCC13826_1819"/>
<dbReference type="eggNOG" id="COG0441">
    <property type="taxonomic scope" value="Bacteria"/>
</dbReference>
<dbReference type="HOGENOM" id="CLU_008554_0_1_7"/>
<dbReference type="OrthoDB" id="9802304at2"/>
<dbReference type="Proteomes" id="UP000001121">
    <property type="component" value="Chromosome"/>
</dbReference>
<dbReference type="GO" id="GO:0005829">
    <property type="term" value="C:cytosol"/>
    <property type="evidence" value="ECO:0007669"/>
    <property type="project" value="TreeGrafter"/>
</dbReference>
<dbReference type="GO" id="GO:0005524">
    <property type="term" value="F:ATP binding"/>
    <property type="evidence" value="ECO:0007669"/>
    <property type="project" value="UniProtKB-UniRule"/>
</dbReference>
<dbReference type="GO" id="GO:0046872">
    <property type="term" value="F:metal ion binding"/>
    <property type="evidence" value="ECO:0007669"/>
    <property type="project" value="UniProtKB-KW"/>
</dbReference>
<dbReference type="GO" id="GO:0004829">
    <property type="term" value="F:threonine-tRNA ligase activity"/>
    <property type="evidence" value="ECO:0007669"/>
    <property type="project" value="UniProtKB-UniRule"/>
</dbReference>
<dbReference type="GO" id="GO:0000049">
    <property type="term" value="F:tRNA binding"/>
    <property type="evidence" value="ECO:0007669"/>
    <property type="project" value="UniProtKB-KW"/>
</dbReference>
<dbReference type="GO" id="GO:0006435">
    <property type="term" value="P:threonyl-tRNA aminoacylation"/>
    <property type="evidence" value="ECO:0007669"/>
    <property type="project" value="UniProtKB-UniRule"/>
</dbReference>
<dbReference type="CDD" id="cd00860">
    <property type="entry name" value="ThrRS_anticodon"/>
    <property type="match status" value="1"/>
</dbReference>
<dbReference type="CDD" id="cd00771">
    <property type="entry name" value="ThrRS_core"/>
    <property type="match status" value="1"/>
</dbReference>
<dbReference type="FunFam" id="3.30.930.10:FF:000019">
    <property type="entry name" value="Threonine--tRNA ligase"/>
    <property type="match status" value="1"/>
</dbReference>
<dbReference type="FunFam" id="3.40.50.800:FF:000001">
    <property type="entry name" value="Threonine--tRNA ligase"/>
    <property type="match status" value="1"/>
</dbReference>
<dbReference type="FunFam" id="3.30.980.10:FF:000005">
    <property type="entry name" value="Threonyl-tRNA synthetase, mitochondrial"/>
    <property type="match status" value="1"/>
</dbReference>
<dbReference type="Gene3D" id="3.30.54.20">
    <property type="match status" value="1"/>
</dbReference>
<dbReference type="Gene3D" id="3.40.50.800">
    <property type="entry name" value="Anticodon-binding domain"/>
    <property type="match status" value="1"/>
</dbReference>
<dbReference type="Gene3D" id="3.30.930.10">
    <property type="entry name" value="Bira Bifunctional Protein, Domain 2"/>
    <property type="match status" value="1"/>
</dbReference>
<dbReference type="Gene3D" id="3.30.980.10">
    <property type="entry name" value="Threonyl-trna Synthetase, Chain A, domain 2"/>
    <property type="match status" value="1"/>
</dbReference>
<dbReference type="HAMAP" id="MF_00184">
    <property type="entry name" value="Thr_tRNA_synth"/>
    <property type="match status" value="1"/>
</dbReference>
<dbReference type="InterPro" id="IPR002314">
    <property type="entry name" value="aa-tRNA-synt_IIb"/>
</dbReference>
<dbReference type="InterPro" id="IPR006195">
    <property type="entry name" value="aa-tRNA-synth_II"/>
</dbReference>
<dbReference type="InterPro" id="IPR045864">
    <property type="entry name" value="aa-tRNA-synth_II/BPL/LPL"/>
</dbReference>
<dbReference type="InterPro" id="IPR004154">
    <property type="entry name" value="Anticodon-bd"/>
</dbReference>
<dbReference type="InterPro" id="IPR036621">
    <property type="entry name" value="Anticodon-bd_dom_sf"/>
</dbReference>
<dbReference type="InterPro" id="IPR002320">
    <property type="entry name" value="Thr-tRNA-ligase_IIa"/>
</dbReference>
<dbReference type="InterPro" id="IPR018163">
    <property type="entry name" value="Thr/Ala-tRNA-synth_IIc_edit"/>
</dbReference>
<dbReference type="InterPro" id="IPR047246">
    <property type="entry name" value="ThrRS_anticodon"/>
</dbReference>
<dbReference type="InterPro" id="IPR033728">
    <property type="entry name" value="ThrRS_core"/>
</dbReference>
<dbReference type="InterPro" id="IPR012947">
    <property type="entry name" value="tRNA_SAD"/>
</dbReference>
<dbReference type="NCBIfam" id="TIGR00418">
    <property type="entry name" value="thrS"/>
    <property type="match status" value="1"/>
</dbReference>
<dbReference type="PANTHER" id="PTHR11451:SF44">
    <property type="entry name" value="THREONINE--TRNA LIGASE, CHLOROPLASTIC_MITOCHONDRIAL 2"/>
    <property type="match status" value="1"/>
</dbReference>
<dbReference type="PANTHER" id="PTHR11451">
    <property type="entry name" value="THREONINE-TRNA LIGASE"/>
    <property type="match status" value="1"/>
</dbReference>
<dbReference type="Pfam" id="PF03129">
    <property type="entry name" value="HGTP_anticodon"/>
    <property type="match status" value="1"/>
</dbReference>
<dbReference type="Pfam" id="PF00587">
    <property type="entry name" value="tRNA-synt_2b"/>
    <property type="match status" value="1"/>
</dbReference>
<dbReference type="Pfam" id="PF07973">
    <property type="entry name" value="tRNA_SAD"/>
    <property type="match status" value="1"/>
</dbReference>
<dbReference type="PRINTS" id="PR01047">
    <property type="entry name" value="TRNASYNTHTHR"/>
</dbReference>
<dbReference type="SMART" id="SM00863">
    <property type="entry name" value="tRNA_SAD"/>
    <property type="match status" value="1"/>
</dbReference>
<dbReference type="SUPFAM" id="SSF52954">
    <property type="entry name" value="Class II aaRS ABD-related"/>
    <property type="match status" value="1"/>
</dbReference>
<dbReference type="SUPFAM" id="SSF55681">
    <property type="entry name" value="Class II aaRS and biotin synthetases"/>
    <property type="match status" value="1"/>
</dbReference>
<dbReference type="SUPFAM" id="SSF55186">
    <property type="entry name" value="ThrRS/AlaRS common domain"/>
    <property type="match status" value="1"/>
</dbReference>
<dbReference type="PROSITE" id="PS50862">
    <property type="entry name" value="AA_TRNA_LIGASE_II"/>
    <property type="match status" value="1"/>
</dbReference>
<sequence>MSDIIAYKLNGEIVDTQSIAGRESSAEPIYFDNSKEALHVIRHSCAHLMAQAIKSLYPKAKFFVGPNVEDGFYYDFRVDDEGTKLGESDLAAIEDKMKELAEKKFDIVKTCSTKANMSEKFKNDDLKQEVLKRIPDGEVSSYAQGDFEDLCRGPHLPNTKFLKFFKLTRVAGAYLGGDESREMLTRIYGTAYADKESLKEHIRIIEEAKKRDHRKLGVEMKLFTFDEEVGGGLPIWLPNGGRLRSKLEQLLYKAHRDRGYEPVRGPELLKADVWRRSGHYANYKENMYFTTIDETEYGIKPMNCVGHIKVYQSDIRSYRDLPLKFFEYGVVHRHEKSGVLHGLFRVREFAQDDSHIFCMPSQIKENILEILKFAGTIMENFGFHYEMEISTKPAKAIGGDEIWDTATKALKEALDENGFKYGIDEGGGAFYGPKIDIKITDALKRKWQCGTIQVDFNLPERFDLGYIDANNERQRPVMLHRALLGSFERFIGILLEHTAGELPFFIAPTQVVIVPISDAHLDYAKEISRELRKINVDSEIASKNESLNKRIRTAEKQRVPMIVVLGDNEVANKSVALRDRQARTQSDMSLAEFVNLTKEKLSEVHF</sequence>
<comment type="function">
    <text evidence="1">Catalyzes the attachment of threonine to tRNA(Thr) in a two-step reaction: L-threonine is first activated by ATP to form Thr-AMP and then transferred to the acceptor end of tRNA(Thr). Also edits incorrectly charged L-seryl-tRNA(Thr).</text>
</comment>
<comment type="catalytic activity">
    <reaction evidence="1">
        <text>tRNA(Thr) + L-threonine + ATP = L-threonyl-tRNA(Thr) + AMP + diphosphate + H(+)</text>
        <dbReference type="Rhea" id="RHEA:24624"/>
        <dbReference type="Rhea" id="RHEA-COMP:9670"/>
        <dbReference type="Rhea" id="RHEA-COMP:9704"/>
        <dbReference type="ChEBI" id="CHEBI:15378"/>
        <dbReference type="ChEBI" id="CHEBI:30616"/>
        <dbReference type="ChEBI" id="CHEBI:33019"/>
        <dbReference type="ChEBI" id="CHEBI:57926"/>
        <dbReference type="ChEBI" id="CHEBI:78442"/>
        <dbReference type="ChEBI" id="CHEBI:78534"/>
        <dbReference type="ChEBI" id="CHEBI:456215"/>
        <dbReference type="EC" id="6.1.1.3"/>
    </reaction>
</comment>
<comment type="cofactor">
    <cofactor evidence="1">
        <name>Zn(2+)</name>
        <dbReference type="ChEBI" id="CHEBI:29105"/>
    </cofactor>
    <text evidence="1">Binds 1 zinc ion per subunit.</text>
</comment>
<comment type="subunit">
    <text evidence="1">Homodimer.</text>
</comment>
<comment type="subcellular location">
    <subcellularLocation>
        <location evidence="1">Cytoplasm</location>
    </subcellularLocation>
</comment>
<comment type="similarity">
    <text evidence="1">Belongs to the class-II aminoacyl-tRNA synthetase family.</text>
</comment>